<comment type="function">
    <text evidence="1">Component of the dark-operative protochlorophyllide reductase (DPOR) that uses Mg-ATP and reduced ferredoxin to reduce ring D of protochlorophyllide (Pchlide) to form chlorophyllide a (Chlide). This reaction is light-independent. The NB-protein (ChlN-ChlB) is the catalytic component of the complex.</text>
</comment>
<comment type="catalytic activity">
    <reaction evidence="1">
        <text>chlorophyllide a + oxidized 2[4Fe-4S]-[ferredoxin] + 2 ADP + 2 phosphate = protochlorophyllide a + reduced 2[4Fe-4S]-[ferredoxin] + 2 ATP + 2 H2O</text>
        <dbReference type="Rhea" id="RHEA:28202"/>
        <dbReference type="Rhea" id="RHEA-COMP:10002"/>
        <dbReference type="Rhea" id="RHEA-COMP:10004"/>
        <dbReference type="ChEBI" id="CHEBI:15377"/>
        <dbReference type="ChEBI" id="CHEBI:30616"/>
        <dbReference type="ChEBI" id="CHEBI:33722"/>
        <dbReference type="ChEBI" id="CHEBI:33723"/>
        <dbReference type="ChEBI" id="CHEBI:43474"/>
        <dbReference type="ChEBI" id="CHEBI:83348"/>
        <dbReference type="ChEBI" id="CHEBI:83350"/>
        <dbReference type="ChEBI" id="CHEBI:456216"/>
        <dbReference type="EC" id="1.3.7.7"/>
    </reaction>
</comment>
<comment type="cofactor">
    <cofactor evidence="1">
        <name>[4Fe-4S] cluster</name>
        <dbReference type="ChEBI" id="CHEBI:49883"/>
    </cofactor>
    <text evidence="1">Binds 1 [4Fe-4S] cluster per heterodimer. The cluster is bound at the heterodimer interface by residues from both subunits.</text>
</comment>
<comment type="pathway">
    <text evidence="1">Porphyrin-containing compound metabolism; chlorophyll biosynthesis (light-independent).</text>
</comment>
<comment type="subunit">
    <text evidence="1">Protochlorophyllide reductase is composed of three subunits; ChlL, ChlN and ChlB. Forms a heterotetramer of two ChlB and two ChlN subunits.</text>
</comment>
<comment type="similarity">
    <text evidence="1">Belongs to the ChlB/BchB/BchZ family.</text>
</comment>
<feature type="chain" id="PRO_1000120536" description="Light-independent protochlorophyllide reductase subunit B">
    <location>
        <begin position="1"/>
        <end position="508"/>
    </location>
</feature>
<feature type="active site" description="Proton donor" evidence="1">
    <location>
        <position position="294"/>
    </location>
</feature>
<feature type="binding site" evidence="1">
    <location>
        <position position="36"/>
    </location>
    <ligand>
        <name>[4Fe-4S] cluster</name>
        <dbReference type="ChEBI" id="CHEBI:49883"/>
        <note>ligand shared with heterodimeric partner</note>
    </ligand>
</feature>
<feature type="binding site" evidence="1">
    <location>
        <begin position="429"/>
        <end position="430"/>
    </location>
    <ligand>
        <name>substrate</name>
    </ligand>
</feature>
<proteinExistence type="inferred from homology"/>
<protein>
    <recommendedName>
        <fullName evidence="1">Light-independent protochlorophyllide reductase subunit B</fullName>
        <shortName evidence="1">DPOR subunit B</shortName>
        <shortName evidence="1">LI-POR subunit B</shortName>
        <ecNumber evidence="1">1.3.7.7</ecNumber>
    </recommendedName>
</protein>
<sequence length="508" mass="56668">MKLAYWMYAGPAHIGTLRIASSFKNVHAIMHAPLGDDYFNVMRSMLERERNFTPVTASIVDRNVLARGSQEKVVDNIVRKDQEERPDLIVLTPTCTSSILQEDLENFVARAQLDAQGDVILADVNHYRVNELQAGDRTLQQIVQFYINKARKKGDLATEKTPQPSVNIIGISTLGFHNNHDIRELKTLMAELGISVNLVIPDKASVHDLKKLPQAWFNLVPYRELGLPTAKYLEQEFDQPYVDITPMGVVETARCIRAIQGAINDQGATADYEAFIEEQTLHVSQAAWFSRSIDCQNLTGKKAIVFGDNTHAVAMTKILAREMGIHVVLAGTYCKYDADWFRQEVSEYCDEILISEDHGEIADAIARLEPAAIFGTQMERHVGKRLNIPCGVIAAPIHIQNFPIGYRPFVGYEGTNQIADLVYNSFTLGMEDHLLEIFGGHDTKEVITTTMSASSDLNWTTEAQGQLNKVPGFVRGKVKRNTEKYARAQGLSEISLEVLYAAKESVGA</sequence>
<organism>
    <name type="scientific">Picosynechococcus sp. (strain ATCC 27264 / PCC 7002 / PR-6)</name>
    <name type="common">Agmenellum quadruplicatum</name>
    <dbReference type="NCBI Taxonomy" id="32049"/>
    <lineage>
        <taxon>Bacteria</taxon>
        <taxon>Bacillati</taxon>
        <taxon>Cyanobacteriota</taxon>
        <taxon>Cyanophyceae</taxon>
        <taxon>Oscillatoriophycideae</taxon>
        <taxon>Chroococcales</taxon>
        <taxon>Geminocystaceae</taxon>
        <taxon>Picosynechococcus</taxon>
    </lineage>
</organism>
<keyword id="KW-0004">4Fe-4S</keyword>
<keyword id="KW-0067">ATP-binding</keyword>
<keyword id="KW-0149">Chlorophyll biosynthesis</keyword>
<keyword id="KW-0408">Iron</keyword>
<keyword id="KW-0411">Iron-sulfur</keyword>
<keyword id="KW-0479">Metal-binding</keyword>
<keyword id="KW-0547">Nucleotide-binding</keyword>
<keyword id="KW-0560">Oxidoreductase</keyword>
<keyword id="KW-0602">Photosynthesis</keyword>
<keyword id="KW-1185">Reference proteome</keyword>
<dbReference type="EC" id="1.3.7.7" evidence="1"/>
<dbReference type="EMBL" id="CP000951">
    <property type="protein sequence ID" value="ACA99642.1"/>
    <property type="molecule type" value="Genomic_DNA"/>
</dbReference>
<dbReference type="SMR" id="B1XP49"/>
<dbReference type="STRING" id="32049.SYNPCC7002_A1652"/>
<dbReference type="KEGG" id="syp:SYNPCC7002_A1652"/>
<dbReference type="eggNOG" id="COG2710">
    <property type="taxonomic scope" value="Bacteria"/>
</dbReference>
<dbReference type="HOGENOM" id="CLU_025470_0_0_3"/>
<dbReference type="UniPathway" id="UPA00670"/>
<dbReference type="Proteomes" id="UP000001688">
    <property type="component" value="Chromosome"/>
</dbReference>
<dbReference type="GO" id="GO:0051539">
    <property type="term" value="F:4 iron, 4 sulfur cluster binding"/>
    <property type="evidence" value="ECO:0007669"/>
    <property type="project" value="UniProtKB-UniRule"/>
</dbReference>
<dbReference type="GO" id="GO:0005524">
    <property type="term" value="F:ATP binding"/>
    <property type="evidence" value="ECO:0007669"/>
    <property type="project" value="UniProtKB-UniRule"/>
</dbReference>
<dbReference type="GO" id="GO:0046872">
    <property type="term" value="F:metal ion binding"/>
    <property type="evidence" value="ECO:0007669"/>
    <property type="project" value="UniProtKB-KW"/>
</dbReference>
<dbReference type="GO" id="GO:0016730">
    <property type="term" value="F:oxidoreductase activity, acting on iron-sulfur proteins as donors"/>
    <property type="evidence" value="ECO:0007669"/>
    <property type="project" value="InterPro"/>
</dbReference>
<dbReference type="GO" id="GO:0016636">
    <property type="term" value="F:oxidoreductase activity, acting on the CH-CH group of donors, iron-sulfur protein as acceptor"/>
    <property type="evidence" value="ECO:0007669"/>
    <property type="project" value="UniProtKB-UniRule"/>
</dbReference>
<dbReference type="GO" id="GO:0036068">
    <property type="term" value="P:light-independent chlorophyll biosynthetic process"/>
    <property type="evidence" value="ECO:0007669"/>
    <property type="project" value="UniProtKB-UniRule"/>
</dbReference>
<dbReference type="GO" id="GO:0019685">
    <property type="term" value="P:photosynthesis, dark reaction"/>
    <property type="evidence" value="ECO:0007669"/>
    <property type="project" value="InterPro"/>
</dbReference>
<dbReference type="CDD" id="cd01981">
    <property type="entry name" value="Pchlide_reductase_B"/>
    <property type="match status" value="1"/>
</dbReference>
<dbReference type="Gene3D" id="1.20.89.20">
    <property type="match status" value="1"/>
</dbReference>
<dbReference type="Gene3D" id="3.40.50.1980">
    <property type="entry name" value="Nitrogenase molybdenum iron protein domain"/>
    <property type="match status" value="3"/>
</dbReference>
<dbReference type="Gene3D" id="1.10.8.550">
    <property type="entry name" value="Proto-chlorophyllide reductase 57 kD subunit B"/>
    <property type="match status" value="1"/>
</dbReference>
<dbReference type="HAMAP" id="MF_00353">
    <property type="entry name" value="ChlB_BchB"/>
    <property type="match status" value="1"/>
</dbReference>
<dbReference type="InterPro" id="IPR050152">
    <property type="entry name" value="ChlB/BchB/BchZ"/>
</dbReference>
<dbReference type="InterPro" id="IPR013580">
    <property type="entry name" value="LI-POR_suB-like_C"/>
</dbReference>
<dbReference type="InterPro" id="IPR000510">
    <property type="entry name" value="Nase/OxRdtase_comp1"/>
</dbReference>
<dbReference type="InterPro" id="IPR042298">
    <property type="entry name" value="P-CP_red_C"/>
</dbReference>
<dbReference type="InterPro" id="IPR005969">
    <property type="entry name" value="Protochl_reductB"/>
</dbReference>
<dbReference type="InterPro" id="IPR016209">
    <property type="entry name" value="Protochlorophyllide_Rdtase"/>
</dbReference>
<dbReference type="NCBIfam" id="TIGR01278">
    <property type="entry name" value="DPOR_BchB"/>
    <property type="match status" value="1"/>
</dbReference>
<dbReference type="PANTHER" id="PTHR33712">
    <property type="entry name" value="LIGHT-INDEPENDENT PROTOCHLOROPHYLLIDE REDUCTASE SUBUNIT B"/>
    <property type="match status" value="1"/>
</dbReference>
<dbReference type="PANTHER" id="PTHR33712:SF7">
    <property type="entry name" value="LIGHT-INDEPENDENT PROTOCHLOROPHYLLIDE REDUCTASE SUBUNIT B"/>
    <property type="match status" value="1"/>
</dbReference>
<dbReference type="Pfam" id="PF00148">
    <property type="entry name" value="Oxidored_nitro"/>
    <property type="match status" value="1"/>
</dbReference>
<dbReference type="Pfam" id="PF08369">
    <property type="entry name" value="PCP_red"/>
    <property type="match status" value="1"/>
</dbReference>
<dbReference type="PIRSF" id="PIRSF000163">
    <property type="entry name" value="PCP_ChlB"/>
    <property type="match status" value="1"/>
</dbReference>
<dbReference type="SUPFAM" id="SSF53807">
    <property type="entry name" value="Helical backbone' metal receptor"/>
    <property type="match status" value="1"/>
</dbReference>
<accession>B1XP49</accession>
<name>CHLB_PICP2</name>
<reference key="1">
    <citation type="submission" date="2008-02" db="EMBL/GenBank/DDBJ databases">
        <title>Complete sequence of Synechococcus sp. PCC 7002.</title>
        <authorList>
            <person name="Li T."/>
            <person name="Zhao J."/>
            <person name="Zhao C."/>
            <person name="Liu Z."/>
            <person name="Zhao F."/>
            <person name="Marquardt J."/>
            <person name="Nomura C.T."/>
            <person name="Persson S."/>
            <person name="Detter J.C."/>
            <person name="Richardson P.M."/>
            <person name="Lanz C."/>
            <person name="Schuster S.C."/>
            <person name="Wang J."/>
            <person name="Li S."/>
            <person name="Huang X."/>
            <person name="Cai T."/>
            <person name="Yu Z."/>
            <person name="Luo J."/>
            <person name="Zhao J."/>
            <person name="Bryant D.A."/>
        </authorList>
    </citation>
    <scope>NUCLEOTIDE SEQUENCE [LARGE SCALE GENOMIC DNA]</scope>
    <source>
        <strain>ATCC 27264 / PCC 7002 / PR-6</strain>
    </source>
</reference>
<evidence type="ECO:0000255" key="1">
    <source>
        <dbReference type="HAMAP-Rule" id="MF_00353"/>
    </source>
</evidence>
<gene>
    <name evidence="1" type="primary">chlB</name>
    <name type="ordered locus">SYNPCC7002_A1652</name>
</gene>